<comment type="similarity">
    <text evidence="2">Belongs to the glyoxalase I family.</text>
</comment>
<evidence type="ECO:0000255" key="1">
    <source>
        <dbReference type="PROSITE-ProRule" id="PRU01163"/>
    </source>
</evidence>
<evidence type="ECO:0000305" key="2"/>
<organism>
    <name type="scientific">Dictyostelium discoideum</name>
    <name type="common">Social amoeba</name>
    <dbReference type="NCBI Taxonomy" id="44689"/>
    <lineage>
        <taxon>Eukaryota</taxon>
        <taxon>Amoebozoa</taxon>
        <taxon>Evosea</taxon>
        <taxon>Eumycetozoa</taxon>
        <taxon>Dictyostelia</taxon>
        <taxon>Dictyosteliales</taxon>
        <taxon>Dictyosteliaceae</taxon>
        <taxon>Dictyostelium</taxon>
    </lineage>
</organism>
<name>GLOD5_DICDI</name>
<accession>Q54L71</accession>
<protein>
    <recommendedName>
        <fullName>Glyoxalase domain-containing protein 5 homolog</fullName>
    </recommendedName>
</protein>
<keyword id="KW-1185">Reference proteome</keyword>
<sequence length="129" mass="14633">MFIDRLDHLVLTVSDIEKTCNFYENILGMKVITFGKDNERKALTFGNQKINLHKKGAEFEPKALLPTAGSADLCFITITPLHEVITELFQKNITIEEGPCERTGALSKPILSVYIRDPDYNLIEISNYK</sequence>
<proteinExistence type="inferred from homology"/>
<gene>
    <name type="primary">glod5</name>
    <name type="ORF">DDB_G0286857</name>
</gene>
<feature type="chain" id="PRO_0000328133" description="Glyoxalase domain-containing protein 5 homolog">
    <location>
        <begin position="1"/>
        <end position="129"/>
    </location>
</feature>
<feature type="domain" description="VOC" evidence="1">
    <location>
        <begin position="5"/>
        <end position="128"/>
    </location>
</feature>
<dbReference type="EMBL" id="AAFI02000090">
    <property type="protein sequence ID" value="EAL64026.1"/>
    <property type="molecule type" value="Genomic_DNA"/>
</dbReference>
<dbReference type="RefSeq" id="XP_637532.1">
    <property type="nucleotide sequence ID" value="XM_632440.1"/>
</dbReference>
<dbReference type="SMR" id="Q54L71"/>
<dbReference type="STRING" id="44689.Q54L71"/>
<dbReference type="PaxDb" id="44689-DDB0267048"/>
<dbReference type="EnsemblProtists" id="EAL64026">
    <property type="protein sequence ID" value="EAL64026"/>
    <property type="gene ID" value="DDB_G0286857"/>
</dbReference>
<dbReference type="GeneID" id="8625830"/>
<dbReference type="KEGG" id="ddi:DDB_G0286857"/>
<dbReference type="dictyBase" id="DDB_G0286857">
    <property type="gene designation" value="glod5"/>
</dbReference>
<dbReference type="VEuPathDB" id="AmoebaDB:DDB_G0286857"/>
<dbReference type="eggNOG" id="ENOG502S0RY">
    <property type="taxonomic scope" value="Eukaryota"/>
</dbReference>
<dbReference type="HOGENOM" id="CLU_046006_4_3_1"/>
<dbReference type="InParanoid" id="Q54L71"/>
<dbReference type="OMA" id="FGTHKIN"/>
<dbReference type="PhylomeDB" id="Q54L71"/>
<dbReference type="PRO" id="PR:Q54L71"/>
<dbReference type="Proteomes" id="UP000002195">
    <property type="component" value="Chromosome 4"/>
</dbReference>
<dbReference type="CDD" id="cd07253">
    <property type="entry name" value="GLOD5"/>
    <property type="match status" value="1"/>
</dbReference>
<dbReference type="Gene3D" id="3.10.180.10">
    <property type="entry name" value="2,3-Dihydroxybiphenyl 1,2-Dioxygenase, domain 1"/>
    <property type="match status" value="1"/>
</dbReference>
<dbReference type="InterPro" id="IPR029068">
    <property type="entry name" value="Glyas_Bleomycin-R_OHBP_Dase"/>
</dbReference>
<dbReference type="InterPro" id="IPR004360">
    <property type="entry name" value="Glyas_Fos-R_dOase_dom"/>
</dbReference>
<dbReference type="InterPro" id="IPR050383">
    <property type="entry name" value="GlyoxalaseI/FosfomycinResist"/>
</dbReference>
<dbReference type="InterPro" id="IPR037523">
    <property type="entry name" value="VOC"/>
</dbReference>
<dbReference type="PANTHER" id="PTHR21366:SF14">
    <property type="entry name" value="GLYOXALASE DOMAIN-CONTAINING PROTEIN 5"/>
    <property type="match status" value="1"/>
</dbReference>
<dbReference type="PANTHER" id="PTHR21366">
    <property type="entry name" value="GLYOXALASE FAMILY PROTEIN"/>
    <property type="match status" value="1"/>
</dbReference>
<dbReference type="Pfam" id="PF00903">
    <property type="entry name" value="Glyoxalase"/>
    <property type="match status" value="1"/>
</dbReference>
<dbReference type="SUPFAM" id="SSF54593">
    <property type="entry name" value="Glyoxalase/Bleomycin resistance protein/Dihydroxybiphenyl dioxygenase"/>
    <property type="match status" value="1"/>
</dbReference>
<dbReference type="PROSITE" id="PS51819">
    <property type="entry name" value="VOC"/>
    <property type="match status" value="1"/>
</dbReference>
<reference key="1">
    <citation type="journal article" date="2005" name="Nature">
        <title>The genome of the social amoeba Dictyostelium discoideum.</title>
        <authorList>
            <person name="Eichinger L."/>
            <person name="Pachebat J.A."/>
            <person name="Gloeckner G."/>
            <person name="Rajandream M.A."/>
            <person name="Sucgang R."/>
            <person name="Berriman M."/>
            <person name="Song J."/>
            <person name="Olsen R."/>
            <person name="Szafranski K."/>
            <person name="Xu Q."/>
            <person name="Tunggal B."/>
            <person name="Kummerfeld S."/>
            <person name="Madera M."/>
            <person name="Konfortov B.A."/>
            <person name="Rivero F."/>
            <person name="Bankier A.T."/>
            <person name="Lehmann R."/>
            <person name="Hamlin N."/>
            <person name="Davies R."/>
            <person name="Gaudet P."/>
            <person name="Fey P."/>
            <person name="Pilcher K."/>
            <person name="Chen G."/>
            <person name="Saunders D."/>
            <person name="Sodergren E.J."/>
            <person name="Davis P."/>
            <person name="Kerhornou A."/>
            <person name="Nie X."/>
            <person name="Hall N."/>
            <person name="Anjard C."/>
            <person name="Hemphill L."/>
            <person name="Bason N."/>
            <person name="Farbrother P."/>
            <person name="Desany B."/>
            <person name="Just E."/>
            <person name="Morio T."/>
            <person name="Rost R."/>
            <person name="Churcher C.M."/>
            <person name="Cooper J."/>
            <person name="Haydock S."/>
            <person name="van Driessche N."/>
            <person name="Cronin A."/>
            <person name="Goodhead I."/>
            <person name="Muzny D.M."/>
            <person name="Mourier T."/>
            <person name="Pain A."/>
            <person name="Lu M."/>
            <person name="Harper D."/>
            <person name="Lindsay R."/>
            <person name="Hauser H."/>
            <person name="James K.D."/>
            <person name="Quiles M."/>
            <person name="Madan Babu M."/>
            <person name="Saito T."/>
            <person name="Buchrieser C."/>
            <person name="Wardroper A."/>
            <person name="Felder M."/>
            <person name="Thangavelu M."/>
            <person name="Johnson D."/>
            <person name="Knights A."/>
            <person name="Loulseged H."/>
            <person name="Mungall K.L."/>
            <person name="Oliver K."/>
            <person name="Price C."/>
            <person name="Quail M.A."/>
            <person name="Urushihara H."/>
            <person name="Hernandez J."/>
            <person name="Rabbinowitsch E."/>
            <person name="Steffen D."/>
            <person name="Sanders M."/>
            <person name="Ma J."/>
            <person name="Kohara Y."/>
            <person name="Sharp S."/>
            <person name="Simmonds M.N."/>
            <person name="Spiegler S."/>
            <person name="Tivey A."/>
            <person name="Sugano S."/>
            <person name="White B."/>
            <person name="Walker D."/>
            <person name="Woodward J.R."/>
            <person name="Winckler T."/>
            <person name="Tanaka Y."/>
            <person name="Shaulsky G."/>
            <person name="Schleicher M."/>
            <person name="Weinstock G.M."/>
            <person name="Rosenthal A."/>
            <person name="Cox E.C."/>
            <person name="Chisholm R.L."/>
            <person name="Gibbs R.A."/>
            <person name="Loomis W.F."/>
            <person name="Platzer M."/>
            <person name="Kay R.R."/>
            <person name="Williams J.G."/>
            <person name="Dear P.H."/>
            <person name="Noegel A.A."/>
            <person name="Barrell B.G."/>
            <person name="Kuspa A."/>
        </authorList>
    </citation>
    <scope>NUCLEOTIDE SEQUENCE [LARGE SCALE GENOMIC DNA]</scope>
    <source>
        <strain>AX4</strain>
    </source>
</reference>